<organism evidence="8">
    <name type="scientific">Xenopus laevis</name>
    <name type="common">African clawed frog</name>
    <dbReference type="NCBI Taxonomy" id="8355"/>
    <lineage>
        <taxon>Eukaryota</taxon>
        <taxon>Metazoa</taxon>
        <taxon>Chordata</taxon>
        <taxon>Craniata</taxon>
        <taxon>Vertebrata</taxon>
        <taxon>Euteleostomi</taxon>
        <taxon>Amphibia</taxon>
        <taxon>Batrachia</taxon>
        <taxon>Anura</taxon>
        <taxon>Pipoidea</taxon>
        <taxon>Pipidae</taxon>
        <taxon>Xenopodinae</taxon>
        <taxon>Xenopus</taxon>
        <taxon>Xenopus</taxon>
    </lineage>
</organism>
<feature type="signal peptide" evidence="6">
    <location>
        <begin position="1"/>
        <end position="16"/>
    </location>
</feature>
<feature type="propeptide" id="PRO_0000025984" description="Activation peptide" evidence="6">
    <location>
        <begin position="17"/>
        <end position="52"/>
    </location>
</feature>
<feature type="chain" id="PRO_0000025985" description="Cathepsin E-A">
    <location>
        <begin position="53"/>
        <end position="397"/>
    </location>
</feature>
<feature type="domain" description="Peptidase A1" evidence="4">
    <location>
        <begin position="74"/>
        <end position="385"/>
    </location>
</feature>
<feature type="active site" evidence="2 5">
    <location>
        <position position="92"/>
    </location>
</feature>
<feature type="active site" evidence="2 5">
    <location>
        <position position="277"/>
    </location>
</feature>
<feature type="glycosylation site" description="N-linked (GlcNAc...) asparagine" evidence="7">
    <location>
        <position position="86"/>
    </location>
</feature>
<feature type="glycosylation site" description="N-linked (GlcNAc...) asparagine" evidence="7">
    <location>
        <position position="130"/>
    </location>
</feature>
<feature type="disulfide bond" evidence="2">
    <location>
        <begin position="105"/>
        <end position="110"/>
    </location>
</feature>
<feature type="disulfide bond" evidence="2">
    <location>
        <begin position="268"/>
        <end position="272"/>
    </location>
</feature>
<feature type="disulfide bond" evidence="2">
    <location>
        <begin position="310"/>
        <end position="344"/>
    </location>
</feature>
<proteinExistence type="evidence at protein level"/>
<reference evidence="7" key="1">
    <citation type="journal article" date="2003" name="J. Biochem.">
        <title>Differential expression of two cathepsin Es during metamorphosis-associated remodeling of the larval to adult type epithelium in Xenopus stomach.</title>
        <authorList>
            <person name="Ikuzawa M."/>
            <person name="Yasumasu S."/>
            <person name="Inokuchi T."/>
            <person name="Kobayashi K."/>
            <person name="Nomura K."/>
            <person name="Iuchi I."/>
        </authorList>
    </citation>
    <scope>NUCLEOTIDE SEQUENCE [MRNA]</scope>
    <scope>PROTEIN SEQUENCE OF 17-25 AND 53-59</scope>
    <scope>CATALYTIC ACTIVITY</scope>
    <scope>SUBUNIT</scope>
    <scope>TISSUE SPECIFICITY</scope>
    <scope>DEVELOPMENTAL STAGE</scope>
    <scope>GLYCOSYLATION</scope>
</reference>
<evidence type="ECO:0000250" key="1"/>
<evidence type="ECO:0000250" key="2">
    <source>
        <dbReference type="UniProtKB" id="P00790"/>
    </source>
</evidence>
<evidence type="ECO:0000250" key="3">
    <source>
        <dbReference type="UniProtKB" id="P14091"/>
    </source>
</evidence>
<evidence type="ECO:0000255" key="4">
    <source>
        <dbReference type="PROSITE-ProRule" id="PRU01103"/>
    </source>
</evidence>
<evidence type="ECO:0000255" key="5">
    <source>
        <dbReference type="PROSITE-ProRule" id="PRU10094"/>
    </source>
</evidence>
<evidence type="ECO:0000269" key="6">
    <source>
    </source>
</evidence>
<evidence type="ECO:0000305" key="7"/>
<evidence type="ECO:0000312" key="8">
    <source>
        <dbReference type="EMBL" id="BAC57453.1"/>
    </source>
</evidence>
<gene>
    <name type="primary">ctse-a</name>
    <name type="synonym">ce1</name>
</gene>
<sequence length="397" mass="42907">MRQILVLLLFATLVYGLIRVPLKRQKSIRKTLKEKGKLSHIWTQQGIDMVQYTDSCSNDQAPSEPLINYMDVEYFGEISVGTPPQNFTVIFDTGSSNLWVPSVYCISQACAQHDRFQPQLSSTYESNGNNFSLQYGTGSLSGVIGIDAVTVEGILVQNQQFGESVSEPGSTFVDAEFDGILGLGYPSIAVGDCTPVFDNMIAQNLVELPMFSVYMSRNPNSAVGGELVFGGFDASRFSGQLNWVPVTNQGYWQIQLDNVQINGEVLFCSGGCQAIVDTGTSLITGPSSDIVQLQNIIGASAANGDYEVDCSVLNEMPTVTFTINGIGYQMTPQQYTLQDGGGVCSSGFQGLDIPPPAGPLWILGDVFIGQYYSVFDRGNNRVGLAPVVPYPPLKNGV</sequence>
<comment type="function">
    <text evidence="3">May have a role in immune function. Probably involved in the processing of antigenic peptides during MHC class II-mediated antigen presentation (By similarity).</text>
</comment>
<comment type="catalytic activity">
    <reaction evidence="6">
        <text>Similar to cathepsin D, but slightly broader specificity.</text>
        <dbReference type="EC" id="3.4.23.34"/>
    </reaction>
</comment>
<comment type="subunit">
    <text evidence="6">Homodimer; disulfide-linked.</text>
</comment>
<comment type="subcellular location">
    <subcellularLocation>
        <location evidence="1">Endosome</location>
    </subcellularLocation>
    <text evidence="1">The proenzyme is localized to the endoplasmic reticulum and Golgi apparatus, while the mature enzyme is localized to the endosome.</text>
</comment>
<comment type="tissue specificity">
    <text evidence="6">Expressed predominantly in the larval foregut and the anterior and posterior adult stomach.</text>
</comment>
<comment type="developmental stage">
    <text evidence="6">Expression levels are high in surface mucous cells and manicotto gland cells of the foregut epithelium of pro-metamorphic tadpoles. During metamorphosis, expression levels decrease markedly in larval epithelial cells but are high in proliferating adult epithelial primordia. In the adult stomach, expression was strongest in oxynticopeptic cells, but was also detected at a lower level in surface mucose cells.</text>
</comment>
<comment type="PTM">
    <text evidence="6">Glycosylated. Contains high mannose-type oligosaccharide.</text>
</comment>
<comment type="similarity">
    <text evidence="7">Belongs to the peptidase A1 family.</text>
</comment>
<protein>
    <recommendedName>
        <fullName>Cathepsin E-A</fullName>
        <ecNumber>3.4.23.34</ecNumber>
    </recommendedName>
</protein>
<name>CATEA_XENLA</name>
<keyword id="KW-0064">Aspartyl protease</keyword>
<keyword id="KW-0903">Direct protein sequencing</keyword>
<keyword id="KW-1015">Disulfide bond</keyword>
<keyword id="KW-0967">Endosome</keyword>
<keyword id="KW-0325">Glycoprotein</keyword>
<keyword id="KW-0378">Hydrolase</keyword>
<keyword id="KW-0645">Protease</keyword>
<keyword id="KW-1185">Reference proteome</keyword>
<keyword id="KW-0732">Signal</keyword>
<keyword id="KW-0865">Zymogen</keyword>
<dbReference type="EC" id="3.4.23.34"/>
<dbReference type="EMBL" id="AB080684">
    <property type="protein sequence ID" value="BAC57453.1"/>
    <property type="molecule type" value="mRNA"/>
</dbReference>
<dbReference type="RefSeq" id="NP_001079043.1">
    <property type="nucleotide sequence ID" value="NM_001085574.1"/>
</dbReference>
<dbReference type="SMR" id="Q805F3"/>
<dbReference type="MEROPS" id="A01.010"/>
<dbReference type="GlyCosmos" id="Q805F3">
    <property type="glycosylation" value="2 sites, No reported glycans"/>
</dbReference>
<dbReference type="GeneID" id="373572"/>
<dbReference type="KEGG" id="xla:373572"/>
<dbReference type="AGR" id="Xenbase:XB-GENE-947868"/>
<dbReference type="CTD" id="373572"/>
<dbReference type="Xenbase" id="XB-GENE-947868">
    <property type="gene designation" value="ctse.L"/>
</dbReference>
<dbReference type="OMA" id="YGVECAN"/>
<dbReference type="OrthoDB" id="771136at2759"/>
<dbReference type="Proteomes" id="UP000186698">
    <property type="component" value="Chromosome 2L"/>
</dbReference>
<dbReference type="Bgee" id="373572">
    <property type="expression patterns" value="Expressed in stomach and 14 other cell types or tissues"/>
</dbReference>
<dbReference type="GO" id="GO:0005768">
    <property type="term" value="C:endosome"/>
    <property type="evidence" value="ECO:0000250"/>
    <property type="project" value="UniProtKB"/>
</dbReference>
<dbReference type="GO" id="GO:0004190">
    <property type="term" value="F:aspartic-type endopeptidase activity"/>
    <property type="evidence" value="ECO:0000314"/>
    <property type="project" value="UniProtKB"/>
</dbReference>
<dbReference type="GO" id="GO:0019886">
    <property type="term" value="P:antigen processing and presentation of exogenous peptide antigen via MHC class II"/>
    <property type="evidence" value="ECO:0000250"/>
    <property type="project" value="UniProtKB"/>
</dbReference>
<dbReference type="GO" id="GO:0006508">
    <property type="term" value="P:proteolysis"/>
    <property type="evidence" value="ECO:0000318"/>
    <property type="project" value="GO_Central"/>
</dbReference>
<dbReference type="CDD" id="cd05486">
    <property type="entry name" value="Cathespin_E"/>
    <property type="match status" value="1"/>
</dbReference>
<dbReference type="FunFam" id="2.40.70.10:FF:000006">
    <property type="entry name" value="Cathepsin E"/>
    <property type="match status" value="1"/>
</dbReference>
<dbReference type="FunFam" id="2.40.70.10:FF:000004">
    <property type="entry name" value="Pepsin A"/>
    <property type="match status" value="1"/>
</dbReference>
<dbReference type="Gene3D" id="6.10.140.60">
    <property type="match status" value="1"/>
</dbReference>
<dbReference type="Gene3D" id="2.40.70.10">
    <property type="entry name" value="Acid Proteases"/>
    <property type="match status" value="2"/>
</dbReference>
<dbReference type="InterPro" id="IPR001461">
    <property type="entry name" value="Aspartic_peptidase_A1"/>
</dbReference>
<dbReference type="InterPro" id="IPR001969">
    <property type="entry name" value="Aspartic_peptidase_AS"/>
</dbReference>
<dbReference type="InterPro" id="IPR012848">
    <property type="entry name" value="Aspartic_peptidase_N"/>
</dbReference>
<dbReference type="InterPro" id="IPR018222">
    <property type="entry name" value="Nuclear_transport_factor_2_euk"/>
</dbReference>
<dbReference type="InterPro" id="IPR033121">
    <property type="entry name" value="PEPTIDASE_A1"/>
</dbReference>
<dbReference type="InterPro" id="IPR021109">
    <property type="entry name" value="Peptidase_aspartic_dom_sf"/>
</dbReference>
<dbReference type="PANTHER" id="PTHR47966">
    <property type="entry name" value="BETA-SITE APP-CLEAVING ENZYME, ISOFORM A-RELATED"/>
    <property type="match status" value="1"/>
</dbReference>
<dbReference type="PANTHER" id="PTHR47966:SF26">
    <property type="entry name" value="CATHEPSIN E"/>
    <property type="match status" value="1"/>
</dbReference>
<dbReference type="Pfam" id="PF07966">
    <property type="entry name" value="A1_Propeptide"/>
    <property type="match status" value="1"/>
</dbReference>
<dbReference type="Pfam" id="PF00026">
    <property type="entry name" value="Asp"/>
    <property type="match status" value="1"/>
</dbReference>
<dbReference type="PRINTS" id="PR00792">
    <property type="entry name" value="PEPSIN"/>
</dbReference>
<dbReference type="SUPFAM" id="SSF50630">
    <property type="entry name" value="Acid proteases"/>
    <property type="match status" value="1"/>
</dbReference>
<dbReference type="PROSITE" id="PS00141">
    <property type="entry name" value="ASP_PROTEASE"/>
    <property type="match status" value="2"/>
</dbReference>
<dbReference type="PROSITE" id="PS51767">
    <property type="entry name" value="PEPTIDASE_A1"/>
    <property type="match status" value="1"/>
</dbReference>
<accession>Q805F3</accession>